<accession>B2HNC1</accession>
<feature type="chain" id="PRO_0000347682" description="Alanine--tRNA ligase">
    <location>
        <begin position="1"/>
        <end position="901"/>
    </location>
</feature>
<feature type="binding site" evidence="1">
    <location>
        <position position="581"/>
    </location>
    <ligand>
        <name>Zn(2+)</name>
        <dbReference type="ChEBI" id="CHEBI:29105"/>
    </ligand>
</feature>
<feature type="binding site" evidence="1">
    <location>
        <position position="585"/>
    </location>
    <ligand>
        <name>Zn(2+)</name>
        <dbReference type="ChEBI" id="CHEBI:29105"/>
    </ligand>
</feature>
<feature type="binding site" evidence="1">
    <location>
        <position position="684"/>
    </location>
    <ligand>
        <name>Zn(2+)</name>
        <dbReference type="ChEBI" id="CHEBI:29105"/>
    </ligand>
</feature>
<feature type="binding site" evidence="1">
    <location>
        <position position="688"/>
    </location>
    <ligand>
        <name>Zn(2+)</name>
        <dbReference type="ChEBI" id="CHEBI:29105"/>
    </ligand>
</feature>
<evidence type="ECO:0000255" key="1">
    <source>
        <dbReference type="HAMAP-Rule" id="MF_00036"/>
    </source>
</evidence>
<reference key="1">
    <citation type="journal article" date="2008" name="Genome Res.">
        <title>Insights from the complete genome sequence of Mycobacterium marinum on the evolution of Mycobacterium tuberculosis.</title>
        <authorList>
            <person name="Stinear T.P."/>
            <person name="Seemann T."/>
            <person name="Harrison P.F."/>
            <person name="Jenkin G.A."/>
            <person name="Davies J.K."/>
            <person name="Johnson P.D."/>
            <person name="Abdellah Z."/>
            <person name="Arrowsmith C."/>
            <person name="Chillingworth T."/>
            <person name="Churcher C."/>
            <person name="Clarke K."/>
            <person name="Cronin A."/>
            <person name="Davis P."/>
            <person name="Goodhead I."/>
            <person name="Holroyd N."/>
            <person name="Jagels K."/>
            <person name="Lord A."/>
            <person name="Moule S."/>
            <person name="Mungall K."/>
            <person name="Norbertczak H."/>
            <person name="Quail M.A."/>
            <person name="Rabbinowitsch E."/>
            <person name="Walker D."/>
            <person name="White B."/>
            <person name="Whitehead S."/>
            <person name="Small P.L."/>
            <person name="Brosch R."/>
            <person name="Ramakrishnan L."/>
            <person name="Fischbach M.A."/>
            <person name="Parkhill J."/>
            <person name="Cole S.T."/>
        </authorList>
    </citation>
    <scope>NUCLEOTIDE SEQUENCE [LARGE SCALE GENOMIC DNA]</scope>
    <source>
        <strain>ATCC BAA-535 / M</strain>
    </source>
</reference>
<gene>
    <name evidence="1" type="primary">alaS</name>
    <name type="ordered locus">MMAR_2170</name>
</gene>
<proteinExistence type="inferred from homology"/>
<protein>
    <recommendedName>
        <fullName evidence="1">Alanine--tRNA ligase</fullName>
        <ecNumber evidence="1">6.1.1.7</ecNumber>
    </recommendedName>
    <alternativeName>
        <fullName evidence="1">Alanyl-tRNA synthetase</fullName>
        <shortName evidence="1">AlaRS</shortName>
    </alternativeName>
</protein>
<name>SYA_MYCMM</name>
<sequence length="901" mass="96490">MQTHEIRKRFLDHFVKAGHTEVPSASVILDDPNLLFVNAGMVQFVPFFLGQRTPPYATATSIQKCIRTPDIDEVGITTRHNTFFQMAGNFSFGDYFKRGAIELAWALLTNSVADGGYGLDPEKLWATVYLDDDEAAGLWREVAGLPADRIQRRGMADNYWSMGIPGPCGPSSEIYYDRGPDYGPEGGPVVNEDRYLEIWNLVFMQNERGEGTTKEDYEILGPLPRKNIDTGMGVERVALILQGVPNVYETDLLRPIIDLVAARAPRGYDQGNHADDVRYRIIADHSRTAAILIADGVSPGNDGRGYVLRRLLRRVIRSAKLLNIDTAIVGDLMATVRDAMGPSYPELASDFDRINRIAVAEETAFNRTLASGSRLFDEVAGTTRSSGVSVVSGSDAFTLHDTYGFPIELTLEMASEAGLTVDEGGFRELMAQQRRRAKADAAARKHAHADLTAYRELVDAGPTEFTGFDELTSEARILGIFVDGKRVPVVAHGQAVDADRVELVLDRTPLYAESGGQIADVGTISGTGSGSSARAAVTDVQKIAKTLWLHRVNVESGEFVEGDGVVAAADAGWRKGATQGHSGTHMVHAALRQVLGPNAVQAGSLNRPGYLRFDFNWQGPLTEEQRGQIEEVTNQAVQADFAVHTFTEQLEKAKAMGAMALFGESYPDEVRVVEIGGPFSIELCGGTHVATSAQIGPVTILGESSIGSGVRRVEAYVGLDSFRHLAKERALMAGLASSLKVPSEEVPARVASLVERLKAAEKELERARLASVRAAAVNAAAGAERIGNVWLVAQRMSSEMTPADLRTLVGDIRGKLGSDPAVVALIAAPAGGESSTVPYVVAANRAAQGLGLGANELIKHLATAVDGRGGGKADLAQGSGKKPAGIDAALEALRAEIARVG</sequence>
<comment type="function">
    <text evidence="1">Catalyzes the attachment of alanine to tRNA(Ala) in a two-step reaction: alanine is first activated by ATP to form Ala-AMP and then transferred to the acceptor end of tRNA(Ala). Also edits incorrectly charged Ser-tRNA(Ala) and Gly-tRNA(Ala) via its editing domain.</text>
</comment>
<comment type="catalytic activity">
    <reaction evidence="1">
        <text>tRNA(Ala) + L-alanine + ATP = L-alanyl-tRNA(Ala) + AMP + diphosphate</text>
        <dbReference type="Rhea" id="RHEA:12540"/>
        <dbReference type="Rhea" id="RHEA-COMP:9657"/>
        <dbReference type="Rhea" id="RHEA-COMP:9923"/>
        <dbReference type="ChEBI" id="CHEBI:30616"/>
        <dbReference type="ChEBI" id="CHEBI:33019"/>
        <dbReference type="ChEBI" id="CHEBI:57972"/>
        <dbReference type="ChEBI" id="CHEBI:78442"/>
        <dbReference type="ChEBI" id="CHEBI:78497"/>
        <dbReference type="ChEBI" id="CHEBI:456215"/>
        <dbReference type="EC" id="6.1.1.7"/>
    </reaction>
</comment>
<comment type="cofactor">
    <cofactor evidence="1">
        <name>Zn(2+)</name>
        <dbReference type="ChEBI" id="CHEBI:29105"/>
    </cofactor>
    <text evidence="1">Binds 1 zinc ion per subunit.</text>
</comment>
<comment type="subcellular location">
    <subcellularLocation>
        <location evidence="1">Cytoplasm</location>
    </subcellularLocation>
</comment>
<comment type="domain">
    <text evidence="1">Consists of three domains; the N-terminal catalytic domain, the editing domain and the C-terminal C-Ala domain. The editing domain removes incorrectly charged amino acids, while the C-Ala domain, along with tRNA(Ala), serves as a bridge to cooperatively bring together the editing and aminoacylation centers thus stimulating deacylation of misacylated tRNAs.</text>
</comment>
<comment type="similarity">
    <text evidence="1">Belongs to the class-II aminoacyl-tRNA synthetase family.</text>
</comment>
<keyword id="KW-0030">Aminoacyl-tRNA synthetase</keyword>
<keyword id="KW-0067">ATP-binding</keyword>
<keyword id="KW-0963">Cytoplasm</keyword>
<keyword id="KW-0436">Ligase</keyword>
<keyword id="KW-0479">Metal-binding</keyword>
<keyword id="KW-0547">Nucleotide-binding</keyword>
<keyword id="KW-0648">Protein biosynthesis</keyword>
<keyword id="KW-1185">Reference proteome</keyword>
<keyword id="KW-0694">RNA-binding</keyword>
<keyword id="KW-0820">tRNA-binding</keyword>
<keyword id="KW-0862">Zinc</keyword>
<dbReference type="EC" id="6.1.1.7" evidence="1"/>
<dbReference type="EMBL" id="CP000854">
    <property type="protein sequence ID" value="ACC40619.1"/>
    <property type="molecule type" value="Genomic_DNA"/>
</dbReference>
<dbReference type="RefSeq" id="WP_012393936.1">
    <property type="nucleotide sequence ID" value="NC_010612.1"/>
</dbReference>
<dbReference type="SMR" id="B2HNC1"/>
<dbReference type="STRING" id="216594.MMAR_2170"/>
<dbReference type="KEGG" id="mmi:MMAR_2170"/>
<dbReference type="eggNOG" id="COG0013">
    <property type="taxonomic scope" value="Bacteria"/>
</dbReference>
<dbReference type="HOGENOM" id="CLU_004485_1_1_11"/>
<dbReference type="OrthoDB" id="9803884at2"/>
<dbReference type="Proteomes" id="UP000001190">
    <property type="component" value="Chromosome"/>
</dbReference>
<dbReference type="GO" id="GO:0005829">
    <property type="term" value="C:cytosol"/>
    <property type="evidence" value="ECO:0007669"/>
    <property type="project" value="TreeGrafter"/>
</dbReference>
<dbReference type="GO" id="GO:0004813">
    <property type="term" value="F:alanine-tRNA ligase activity"/>
    <property type="evidence" value="ECO:0007669"/>
    <property type="project" value="UniProtKB-UniRule"/>
</dbReference>
<dbReference type="GO" id="GO:0002161">
    <property type="term" value="F:aminoacyl-tRNA deacylase activity"/>
    <property type="evidence" value="ECO:0007669"/>
    <property type="project" value="TreeGrafter"/>
</dbReference>
<dbReference type="GO" id="GO:0005524">
    <property type="term" value="F:ATP binding"/>
    <property type="evidence" value="ECO:0007669"/>
    <property type="project" value="UniProtKB-UniRule"/>
</dbReference>
<dbReference type="GO" id="GO:0000049">
    <property type="term" value="F:tRNA binding"/>
    <property type="evidence" value="ECO:0007669"/>
    <property type="project" value="UniProtKB-KW"/>
</dbReference>
<dbReference type="GO" id="GO:0008270">
    <property type="term" value="F:zinc ion binding"/>
    <property type="evidence" value="ECO:0007669"/>
    <property type="project" value="UniProtKB-UniRule"/>
</dbReference>
<dbReference type="GO" id="GO:0006419">
    <property type="term" value="P:alanyl-tRNA aminoacylation"/>
    <property type="evidence" value="ECO:0007669"/>
    <property type="project" value="UniProtKB-UniRule"/>
</dbReference>
<dbReference type="CDD" id="cd00673">
    <property type="entry name" value="AlaRS_core"/>
    <property type="match status" value="1"/>
</dbReference>
<dbReference type="FunFam" id="3.10.310.40:FF:000001">
    <property type="entry name" value="Alanine--tRNA ligase"/>
    <property type="match status" value="1"/>
</dbReference>
<dbReference type="FunFam" id="3.30.54.20:FF:000001">
    <property type="entry name" value="Alanine--tRNA ligase"/>
    <property type="match status" value="1"/>
</dbReference>
<dbReference type="FunFam" id="3.30.930.10:FF:000004">
    <property type="entry name" value="Alanine--tRNA ligase"/>
    <property type="match status" value="1"/>
</dbReference>
<dbReference type="FunFam" id="3.30.980.10:FF:000004">
    <property type="entry name" value="Alanine--tRNA ligase, cytoplasmic"/>
    <property type="match status" value="1"/>
</dbReference>
<dbReference type="Gene3D" id="2.40.30.130">
    <property type="match status" value="1"/>
</dbReference>
<dbReference type="Gene3D" id="3.10.310.40">
    <property type="match status" value="1"/>
</dbReference>
<dbReference type="Gene3D" id="3.30.54.20">
    <property type="match status" value="1"/>
</dbReference>
<dbReference type="Gene3D" id="6.10.250.550">
    <property type="match status" value="1"/>
</dbReference>
<dbReference type="Gene3D" id="3.30.930.10">
    <property type="entry name" value="Bira Bifunctional Protein, Domain 2"/>
    <property type="match status" value="1"/>
</dbReference>
<dbReference type="Gene3D" id="3.30.980.10">
    <property type="entry name" value="Threonyl-trna Synthetase, Chain A, domain 2"/>
    <property type="match status" value="1"/>
</dbReference>
<dbReference type="HAMAP" id="MF_00036_B">
    <property type="entry name" value="Ala_tRNA_synth_B"/>
    <property type="match status" value="1"/>
</dbReference>
<dbReference type="InterPro" id="IPR045864">
    <property type="entry name" value="aa-tRNA-synth_II/BPL/LPL"/>
</dbReference>
<dbReference type="InterPro" id="IPR002318">
    <property type="entry name" value="Ala-tRNA-lgiase_IIc"/>
</dbReference>
<dbReference type="InterPro" id="IPR018162">
    <property type="entry name" value="Ala-tRNA-ligase_IIc_anticod-bd"/>
</dbReference>
<dbReference type="InterPro" id="IPR018165">
    <property type="entry name" value="Ala-tRNA-synth_IIc_core"/>
</dbReference>
<dbReference type="InterPro" id="IPR018164">
    <property type="entry name" value="Ala-tRNA-synth_IIc_N"/>
</dbReference>
<dbReference type="InterPro" id="IPR050058">
    <property type="entry name" value="Ala-tRNA_ligase"/>
</dbReference>
<dbReference type="InterPro" id="IPR023033">
    <property type="entry name" value="Ala_tRNA_ligase_euk/bac"/>
</dbReference>
<dbReference type="InterPro" id="IPR003156">
    <property type="entry name" value="DHHA1_dom"/>
</dbReference>
<dbReference type="InterPro" id="IPR018163">
    <property type="entry name" value="Thr/Ala-tRNA-synth_IIc_edit"/>
</dbReference>
<dbReference type="InterPro" id="IPR009000">
    <property type="entry name" value="Transl_B-barrel_sf"/>
</dbReference>
<dbReference type="InterPro" id="IPR012947">
    <property type="entry name" value="tRNA_SAD"/>
</dbReference>
<dbReference type="NCBIfam" id="TIGR00344">
    <property type="entry name" value="alaS"/>
    <property type="match status" value="1"/>
</dbReference>
<dbReference type="PANTHER" id="PTHR11777:SF9">
    <property type="entry name" value="ALANINE--TRNA LIGASE, CYTOPLASMIC"/>
    <property type="match status" value="1"/>
</dbReference>
<dbReference type="PANTHER" id="PTHR11777">
    <property type="entry name" value="ALANYL-TRNA SYNTHETASE"/>
    <property type="match status" value="1"/>
</dbReference>
<dbReference type="Pfam" id="PF02272">
    <property type="entry name" value="DHHA1"/>
    <property type="match status" value="1"/>
</dbReference>
<dbReference type="Pfam" id="PF01411">
    <property type="entry name" value="tRNA-synt_2c"/>
    <property type="match status" value="1"/>
</dbReference>
<dbReference type="Pfam" id="PF07973">
    <property type="entry name" value="tRNA_SAD"/>
    <property type="match status" value="1"/>
</dbReference>
<dbReference type="PRINTS" id="PR00980">
    <property type="entry name" value="TRNASYNTHALA"/>
</dbReference>
<dbReference type="SMART" id="SM00863">
    <property type="entry name" value="tRNA_SAD"/>
    <property type="match status" value="1"/>
</dbReference>
<dbReference type="SUPFAM" id="SSF55681">
    <property type="entry name" value="Class II aaRS and biotin synthetases"/>
    <property type="match status" value="1"/>
</dbReference>
<dbReference type="SUPFAM" id="SSF101353">
    <property type="entry name" value="Putative anticodon-binding domain of alanyl-tRNA synthetase (AlaRS)"/>
    <property type="match status" value="1"/>
</dbReference>
<dbReference type="SUPFAM" id="SSF55186">
    <property type="entry name" value="ThrRS/AlaRS common domain"/>
    <property type="match status" value="1"/>
</dbReference>
<dbReference type="SUPFAM" id="SSF50447">
    <property type="entry name" value="Translation proteins"/>
    <property type="match status" value="1"/>
</dbReference>
<dbReference type="PROSITE" id="PS50860">
    <property type="entry name" value="AA_TRNA_LIGASE_II_ALA"/>
    <property type="match status" value="1"/>
</dbReference>
<organism>
    <name type="scientific">Mycobacterium marinum (strain ATCC BAA-535 / M)</name>
    <dbReference type="NCBI Taxonomy" id="216594"/>
    <lineage>
        <taxon>Bacteria</taxon>
        <taxon>Bacillati</taxon>
        <taxon>Actinomycetota</taxon>
        <taxon>Actinomycetes</taxon>
        <taxon>Mycobacteriales</taxon>
        <taxon>Mycobacteriaceae</taxon>
        <taxon>Mycobacterium</taxon>
        <taxon>Mycobacterium ulcerans group</taxon>
    </lineage>
</organism>